<keyword id="KW-0066">ATP synthesis</keyword>
<keyword id="KW-0067">ATP-binding</keyword>
<keyword id="KW-0997">Cell inner membrane</keyword>
<keyword id="KW-1003">Cell membrane</keyword>
<keyword id="KW-0139">CF(1)</keyword>
<keyword id="KW-0375">Hydrogen ion transport</keyword>
<keyword id="KW-0406">Ion transport</keyword>
<keyword id="KW-0472">Membrane</keyword>
<keyword id="KW-0547">Nucleotide-binding</keyword>
<keyword id="KW-1185">Reference proteome</keyword>
<keyword id="KW-1278">Translocase</keyword>
<keyword id="KW-0813">Transport</keyword>
<gene>
    <name evidence="1" type="primary">atpA</name>
    <name type="ordered locus">GDI0694</name>
    <name type="ordered locus">Gdia_1315</name>
</gene>
<name>ATPA_GLUDA</name>
<evidence type="ECO:0000255" key="1">
    <source>
        <dbReference type="HAMAP-Rule" id="MF_01346"/>
    </source>
</evidence>
<evidence type="ECO:0000305" key="2"/>
<organism>
    <name type="scientific">Gluconacetobacter diazotrophicus (strain ATCC 49037 / DSM 5601 / CCUG 37298 / CIP 103539 / LMG 7603 / PAl5)</name>
    <dbReference type="NCBI Taxonomy" id="272568"/>
    <lineage>
        <taxon>Bacteria</taxon>
        <taxon>Pseudomonadati</taxon>
        <taxon>Pseudomonadota</taxon>
        <taxon>Alphaproteobacteria</taxon>
        <taxon>Acetobacterales</taxon>
        <taxon>Acetobacteraceae</taxon>
        <taxon>Gluconacetobacter</taxon>
    </lineage>
</organism>
<feature type="chain" id="PRO_0000339033" description="ATP synthase subunit alpha">
    <location>
        <begin position="1"/>
        <end position="513"/>
    </location>
</feature>
<feature type="binding site" evidence="1">
    <location>
        <begin position="172"/>
        <end position="179"/>
    </location>
    <ligand>
        <name>ATP</name>
        <dbReference type="ChEBI" id="CHEBI:30616"/>
    </ligand>
</feature>
<feature type="site" description="Required for activity" evidence="1">
    <location>
        <position position="373"/>
    </location>
</feature>
<feature type="sequence conflict" description="In Ref. 2; ACI51097." evidence="2" ref="2">
    <original>E</original>
    <variation>D</variation>
    <location>
        <position position="497"/>
    </location>
</feature>
<accession>A9H9A4</accession>
<accession>B5ZHL7</accession>
<reference key="1">
    <citation type="journal article" date="2009" name="BMC Genomics">
        <title>Complete genome sequence of the sugarcane nitrogen-fixing endophyte Gluconacetobacter diazotrophicus Pal5.</title>
        <authorList>
            <person name="Bertalan M."/>
            <person name="Albano R."/>
            <person name="de Padua V."/>
            <person name="Rouws L."/>
            <person name="Rojas C."/>
            <person name="Hemerly A."/>
            <person name="Teixeira K."/>
            <person name="Schwab S."/>
            <person name="Araujo J."/>
            <person name="Oliveira A."/>
            <person name="Franca L."/>
            <person name="Magalhaes V."/>
            <person name="Alqueres S."/>
            <person name="Cardoso A."/>
            <person name="Almeida W."/>
            <person name="Loureiro M.M."/>
            <person name="Nogueira E."/>
            <person name="Cidade D."/>
            <person name="Oliveira D."/>
            <person name="Simao T."/>
            <person name="Macedo J."/>
            <person name="Valadao A."/>
            <person name="Dreschsel M."/>
            <person name="Freitas F."/>
            <person name="Vidal M."/>
            <person name="Guedes H."/>
            <person name="Rodrigues E."/>
            <person name="Meneses C."/>
            <person name="Brioso P."/>
            <person name="Pozzer L."/>
            <person name="Figueiredo D."/>
            <person name="Montano H."/>
            <person name="Junior J."/>
            <person name="de Souza Filho G."/>
            <person name="Martin Quintana Flores V."/>
            <person name="Ferreira B."/>
            <person name="Branco A."/>
            <person name="Gonzalez P."/>
            <person name="Guillobel H."/>
            <person name="Lemos M."/>
            <person name="Seibel L."/>
            <person name="Macedo J."/>
            <person name="Alves-Ferreira M."/>
            <person name="Sachetto-Martins G."/>
            <person name="Coelho A."/>
            <person name="Santos E."/>
            <person name="Amaral G."/>
            <person name="Neves A."/>
            <person name="Pacheco A.B."/>
            <person name="Carvalho D."/>
            <person name="Lery L."/>
            <person name="Bisch P."/>
            <person name="Rossle S.C."/>
            <person name="Urmenyi T."/>
            <person name="Rael Pereira A."/>
            <person name="Silva R."/>
            <person name="Rondinelli E."/>
            <person name="von Kruger W."/>
            <person name="Martins O."/>
            <person name="Baldani J.I."/>
            <person name="Ferreira P.C."/>
        </authorList>
    </citation>
    <scope>NUCLEOTIDE SEQUENCE [LARGE SCALE GENOMIC DNA]</scope>
    <source>
        <strain>ATCC 49037 / DSM 5601 / CCUG 37298 / CIP 103539 / LMG 7603 / PAl5</strain>
    </source>
</reference>
<reference key="2">
    <citation type="journal article" date="2010" name="Stand. Genomic Sci.">
        <title>Two genome sequences of the same bacterial strain, Gluconacetobacter diazotrophicus PAl 5, suggest a new standard in genome sequence submission.</title>
        <authorList>
            <person name="Giongo A."/>
            <person name="Tyler H.L."/>
            <person name="Zipperer U.N."/>
            <person name="Triplett E.W."/>
        </authorList>
    </citation>
    <scope>NUCLEOTIDE SEQUENCE [LARGE SCALE GENOMIC DNA]</scope>
    <source>
        <strain>ATCC 49037 / DSM 5601 / CCUG 37298 / CIP 103539 / LMG 7603 / PAl5</strain>
    </source>
</reference>
<proteinExistence type="inferred from homology"/>
<sequence>MMEIRPAEISDILKQQIATFDTPVDIAETGTILSVGDGIARVYGLQNVQAGEMVEFPGSGQRGMALNLENDNVGVVIFGDDADMREGDTVSRTGAVVEVPTGKALLGRVVDGLGNPIDGKGPLVGDVVMKRADVKAPGIMPRQSVGEPMQTGIKAIDALVPIGRGQRELIIGDRQTGKTAILIDTIVAQKSVNALGDDKKSLYCIYVAIGQKRSTVAQLVRTLEETGAMEYSIVVAATASDPAPMQYLAPYAACAMGEYFRDNGMHALIVYDDLSKQAVAYRQMSLLLRRPPGREAYPGDVFYLHSRLLERAAKMSDEYGAGSLTALPVIETQAGDVSAYIPTNVISITDGQVFLETDLFYRGIRPAVNVGGSVSRVGSAAQIKAMKQVAGKIKLELAQYREMAAFSQFASDLDPATQKQLARGARLVELLKQPETSPLAVEEQVCVLFAGTRGFIDAVPVDKVSSYERQLLAELHTGGKEILESIRTERQITKDNETRLTDFLTSFGRQFAG</sequence>
<comment type="function">
    <text evidence="1">Produces ATP from ADP in the presence of a proton gradient across the membrane. The alpha chain is a regulatory subunit.</text>
</comment>
<comment type="catalytic activity">
    <reaction evidence="1">
        <text>ATP + H2O + 4 H(+)(in) = ADP + phosphate + 5 H(+)(out)</text>
        <dbReference type="Rhea" id="RHEA:57720"/>
        <dbReference type="ChEBI" id="CHEBI:15377"/>
        <dbReference type="ChEBI" id="CHEBI:15378"/>
        <dbReference type="ChEBI" id="CHEBI:30616"/>
        <dbReference type="ChEBI" id="CHEBI:43474"/>
        <dbReference type="ChEBI" id="CHEBI:456216"/>
        <dbReference type="EC" id="7.1.2.2"/>
    </reaction>
</comment>
<comment type="subunit">
    <text evidence="1">F-type ATPases have 2 components, CF(1) - the catalytic core - and CF(0) - the membrane proton channel. CF(1) has five subunits: alpha(3), beta(3), gamma(1), delta(1), epsilon(1). CF(0) has three main subunits: a(1), b(2) and c(9-12). The alpha and beta chains form an alternating ring which encloses part of the gamma chain. CF(1) is attached to CF(0) by a central stalk formed by the gamma and epsilon chains, while a peripheral stalk is formed by the delta and b chains.</text>
</comment>
<comment type="subcellular location">
    <subcellularLocation>
        <location evidence="1">Cell inner membrane</location>
        <topology evidence="1">Peripheral membrane protein</topology>
    </subcellularLocation>
</comment>
<comment type="similarity">
    <text evidence="1">Belongs to the ATPase alpha/beta chains family.</text>
</comment>
<comment type="sequence caution" evidence="2">
    <conflict type="erroneous initiation">
        <sequence resource="EMBL-CDS" id="ACI51097"/>
    </conflict>
</comment>
<dbReference type="EC" id="7.1.2.2" evidence="1"/>
<dbReference type="EMBL" id="AM889285">
    <property type="protein sequence ID" value="CAP54637.1"/>
    <property type="molecule type" value="Genomic_DNA"/>
</dbReference>
<dbReference type="EMBL" id="CP001189">
    <property type="protein sequence ID" value="ACI51097.1"/>
    <property type="status" value="ALT_INIT"/>
    <property type="molecule type" value="Genomic_DNA"/>
</dbReference>
<dbReference type="RefSeq" id="WP_012553707.1">
    <property type="nucleotide sequence ID" value="NC_011365.1"/>
</dbReference>
<dbReference type="SMR" id="A9H9A4"/>
<dbReference type="STRING" id="272568.GDI0694"/>
<dbReference type="KEGG" id="gdi:GDI0694"/>
<dbReference type="KEGG" id="gdj:Gdia_1315"/>
<dbReference type="eggNOG" id="COG0056">
    <property type="taxonomic scope" value="Bacteria"/>
</dbReference>
<dbReference type="HOGENOM" id="CLU_010091_2_1_5"/>
<dbReference type="Proteomes" id="UP000001176">
    <property type="component" value="Chromosome"/>
</dbReference>
<dbReference type="GO" id="GO:0005886">
    <property type="term" value="C:plasma membrane"/>
    <property type="evidence" value="ECO:0007669"/>
    <property type="project" value="UniProtKB-SubCell"/>
</dbReference>
<dbReference type="GO" id="GO:0045259">
    <property type="term" value="C:proton-transporting ATP synthase complex"/>
    <property type="evidence" value="ECO:0007669"/>
    <property type="project" value="UniProtKB-KW"/>
</dbReference>
<dbReference type="GO" id="GO:0043531">
    <property type="term" value="F:ADP binding"/>
    <property type="evidence" value="ECO:0007669"/>
    <property type="project" value="TreeGrafter"/>
</dbReference>
<dbReference type="GO" id="GO:0005524">
    <property type="term" value="F:ATP binding"/>
    <property type="evidence" value="ECO:0007669"/>
    <property type="project" value="UniProtKB-UniRule"/>
</dbReference>
<dbReference type="GO" id="GO:0046933">
    <property type="term" value="F:proton-transporting ATP synthase activity, rotational mechanism"/>
    <property type="evidence" value="ECO:0007669"/>
    <property type="project" value="UniProtKB-UniRule"/>
</dbReference>
<dbReference type="CDD" id="cd18113">
    <property type="entry name" value="ATP-synt_F1_alpha_C"/>
    <property type="match status" value="1"/>
</dbReference>
<dbReference type="CDD" id="cd18116">
    <property type="entry name" value="ATP-synt_F1_alpha_N"/>
    <property type="match status" value="1"/>
</dbReference>
<dbReference type="CDD" id="cd01132">
    <property type="entry name" value="F1-ATPase_alpha_CD"/>
    <property type="match status" value="1"/>
</dbReference>
<dbReference type="FunFam" id="1.20.150.20:FF:000001">
    <property type="entry name" value="ATP synthase subunit alpha"/>
    <property type="match status" value="1"/>
</dbReference>
<dbReference type="FunFam" id="2.40.30.20:FF:000001">
    <property type="entry name" value="ATP synthase subunit alpha"/>
    <property type="match status" value="1"/>
</dbReference>
<dbReference type="FunFam" id="3.40.50.300:FF:002432">
    <property type="entry name" value="ATP synthase subunit alpha, mitochondrial"/>
    <property type="match status" value="1"/>
</dbReference>
<dbReference type="Gene3D" id="2.40.30.20">
    <property type="match status" value="1"/>
</dbReference>
<dbReference type="Gene3D" id="1.20.150.20">
    <property type="entry name" value="ATP synthase alpha/beta chain, C-terminal domain"/>
    <property type="match status" value="1"/>
</dbReference>
<dbReference type="Gene3D" id="3.40.50.300">
    <property type="entry name" value="P-loop containing nucleotide triphosphate hydrolases"/>
    <property type="match status" value="1"/>
</dbReference>
<dbReference type="HAMAP" id="MF_01346">
    <property type="entry name" value="ATP_synth_alpha_bact"/>
    <property type="match status" value="1"/>
</dbReference>
<dbReference type="InterPro" id="IPR023366">
    <property type="entry name" value="ATP_synth_asu-like_sf"/>
</dbReference>
<dbReference type="InterPro" id="IPR000793">
    <property type="entry name" value="ATP_synth_asu_C"/>
</dbReference>
<dbReference type="InterPro" id="IPR038376">
    <property type="entry name" value="ATP_synth_asu_C_sf"/>
</dbReference>
<dbReference type="InterPro" id="IPR033732">
    <property type="entry name" value="ATP_synth_F1_a_nt-bd_dom"/>
</dbReference>
<dbReference type="InterPro" id="IPR005294">
    <property type="entry name" value="ATP_synth_F1_asu"/>
</dbReference>
<dbReference type="InterPro" id="IPR020003">
    <property type="entry name" value="ATPase_a/bsu_AS"/>
</dbReference>
<dbReference type="InterPro" id="IPR004100">
    <property type="entry name" value="ATPase_F1/V1/A1_a/bsu_N"/>
</dbReference>
<dbReference type="InterPro" id="IPR036121">
    <property type="entry name" value="ATPase_F1/V1/A1_a/bsu_N_sf"/>
</dbReference>
<dbReference type="InterPro" id="IPR000194">
    <property type="entry name" value="ATPase_F1/V1/A1_a/bsu_nucl-bd"/>
</dbReference>
<dbReference type="InterPro" id="IPR027417">
    <property type="entry name" value="P-loop_NTPase"/>
</dbReference>
<dbReference type="NCBIfam" id="TIGR00962">
    <property type="entry name" value="atpA"/>
    <property type="match status" value="1"/>
</dbReference>
<dbReference type="NCBIfam" id="NF009884">
    <property type="entry name" value="PRK13343.1"/>
    <property type="match status" value="1"/>
</dbReference>
<dbReference type="PANTHER" id="PTHR48082">
    <property type="entry name" value="ATP SYNTHASE SUBUNIT ALPHA, MITOCHONDRIAL"/>
    <property type="match status" value="1"/>
</dbReference>
<dbReference type="PANTHER" id="PTHR48082:SF2">
    <property type="entry name" value="ATP SYNTHASE SUBUNIT ALPHA, MITOCHONDRIAL"/>
    <property type="match status" value="1"/>
</dbReference>
<dbReference type="Pfam" id="PF00006">
    <property type="entry name" value="ATP-synt_ab"/>
    <property type="match status" value="1"/>
</dbReference>
<dbReference type="Pfam" id="PF00306">
    <property type="entry name" value="ATP-synt_ab_C"/>
    <property type="match status" value="1"/>
</dbReference>
<dbReference type="Pfam" id="PF02874">
    <property type="entry name" value="ATP-synt_ab_N"/>
    <property type="match status" value="1"/>
</dbReference>
<dbReference type="PIRSF" id="PIRSF039088">
    <property type="entry name" value="F_ATPase_subunit_alpha"/>
    <property type="match status" value="1"/>
</dbReference>
<dbReference type="SUPFAM" id="SSF47917">
    <property type="entry name" value="C-terminal domain of alpha and beta subunits of F1 ATP synthase"/>
    <property type="match status" value="1"/>
</dbReference>
<dbReference type="SUPFAM" id="SSF50615">
    <property type="entry name" value="N-terminal domain of alpha and beta subunits of F1 ATP synthase"/>
    <property type="match status" value="1"/>
</dbReference>
<dbReference type="SUPFAM" id="SSF52540">
    <property type="entry name" value="P-loop containing nucleoside triphosphate hydrolases"/>
    <property type="match status" value="1"/>
</dbReference>
<dbReference type="PROSITE" id="PS00152">
    <property type="entry name" value="ATPASE_ALPHA_BETA"/>
    <property type="match status" value="1"/>
</dbReference>
<protein>
    <recommendedName>
        <fullName evidence="1">ATP synthase subunit alpha</fullName>
        <ecNumber evidence="1">7.1.2.2</ecNumber>
    </recommendedName>
    <alternativeName>
        <fullName evidence="1">ATP synthase F1 sector subunit alpha</fullName>
    </alternativeName>
    <alternativeName>
        <fullName evidence="1">F-ATPase subunit alpha</fullName>
    </alternativeName>
</protein>